<keyword id="KW-0066">ATP synthesis</keyword>
<keyword id="KW-0067">ATP-binding</keyword>
<keyword id="KW-1003">Cell membrane</keyword>
<keyword id="KW-0139">CF(1)</keyword>
<keyword id="KW-0375">Hydrogen ion transport</keyword>
<keyword id="KW-0406">Ion transport</keyword>
<keyword id="KW-0472">Membrane</keyword>
<keyword id="KW-0547">Nucleotide-binding</keyword>
<keyword id="KW-1278">Translocase</keyword>
<keyword id="KW-0813">Transport</keyword>
<evidence type="ECO:0000255" key="1">
    <source>
        <dbReference type="HAMAP-Rule" id="MF_01347"/>
    </source>
</evidence>
<feature type="chain" id="PRO_0000339516" description="ATP synthase subunit beta">
    <location>
        <begin position="1"/>
        <end position="463"/>
    </location>
</feature>
<feature type="binding site" evidence="1">
    <location>
        <begin position="151"/>
        <end position="158"/>
    </location>
    <ligand>
        <name>ATP</name>
        <dbReference type="ChEBI" id="CHEBI:30616"/>
    </ligand>
</feature>
<dbReference type="EC" id="7.1.2.2" evidence="1"/>
<dbReference type="EMBL" id="CP000726">
    <property type="protein sequence ID" value="ABS32414.1"/>
    <property type="molecule type" value="Genomic_DNA"/>
</dbReference>
<dbReference type="SMR" id="A7FQH9"/>
<dbReference type="KEGG" id="cba:CLB_0192"/>
<dbReference type="HOGENOM" id="CLU_022398_0_2_9"/>
<dbReference type="GO" id="GO:0005886">
    <property type="term" value="C:plasma membrane"/>
    <property type="evidence" value="ECO:0007669"/>
    <property type="project" value="UniProtKB-SubCell"/>
</dbReference>
<dbReference type="GO" id="GO:0045259">
    <property type="term" value="C:proton-transporting ATP synthase complex"/>
    <property type="evidence" value="ECO:0007669"/>
    <property type="project" value="UniProtKB-KW"/>
</dbReference>
<dbReference type="GO" id="GO:0005524">
    <property type="term" value="F:ATP binding"/>
    <property type="evidence" value="ECO:0007669"/>
    <property type="project" value="UniProtKB-UniRule"/>
</dbReference>
<dbReference type="GO" id="GO:0016887">
    <property type="term" value="F:ATP hydrolysis activity"/>
    <property type="evidence" value="ECO:0007669"/>
    <property type="project" value="InterPro"/>
</dbReference>
<dbReference type="GO" id="GO:0046933">
    <property type="term" value="F:proton-transporting ATP synthase activity, rotational mechanism"/>
    <property type="evidence" value="ECO:0007669"/>
    <property type="project" value="UniProtKB-UniRule"/>
</dbReference>
<dbReference type="CDD" id="cd18110">
    <property type="entry name" value="ATP-synt_F1_beta_C"/>
    <property type="match status" value="1"/>
</dbReference>
<dbReference type="CDD" id="cd18115">
    <property type="entry name" value="ATP-synt_F1_beta_N"/>
    <property type="match status" value="1"/>
</dbReference>
<dbReference type="CDD" id="cd01133">
    <property type="entry name" value="F1-ATPase_beta_CD"/>
    <property type="match status" value="1"/>
</dbReference>
<dbReference type="FunFam" id="1.10.1140.10:FF:000001">
    <property type="entry name" value="ATP synthase subunit beta"/>
    <property type="match status" value="1"/>
</dbReference>
<dbReference type="FunFam" id="3.40.50.300:FF:000026">
    <property type="entry name" value="ATP synthase subunit beta"/>
    <property type="match status" value="1"/>
</dbReference>
<dbReference type="Gene3D" id="2.40.10.170">
    <property type="match status" value="1"/>
</dbReference>
<dbReference type="Gene3D" id="1.10.1140.10">
    <property type="entry name" value="Bovine Mitochondrial F1-atpase, Atp Synthase Beta Chain, Chain D, domain 3"/>
    <property type="match status" value="1"/>
</dbReference>
<dbReference type="Gene3D" id="3.40.50.300">
    <property type="entry name" value="P-loop containing nucleotide triphosphate hydrolases"/>
    <property type="match status" value="1"/>
</dbReference>
<dbReference type="HAMAP" id="MF_01347">
    <property type="entry name" value="ATP_synth_beta_bact"/>
    <property type="match status" value="1"/>
</dbReference>
<dbReference type="InterPro" id="IPR003593">
    <property type="entry name" value="AAA+_ATPase"/>
</dbReference>
<dbReference type="InterPro" id="IPR055190">
    <property type="entry name" value="ATP-synt_VA_C"/>
</dbReference>
<dbReference type="InterPro" id="IPR005722">
    <property type="entry name" value="ATP_synth_F1_bsu"/>
</dbReference>
<dbReference type="InterPro" id="IPR020003">
    <property type="entry name" value="ATPase_a/bsu_AS"/>
</dbReference>
<dbReference type="InterPro" id="IPR050053">
    <property type="entry name" value="ATPase_alpha/beta_chains"/>
</dbReference>
<dbReference type="InterPro" id="IPR004100">
    <property type="entry name" value="ATPase_F1/V1/A1_a/bsu_N"/>
</dbReference>
<dbReference type="InterPro" id="IPR036121">
    <property type="entry name" value="ATPase_F1/V1/A1_a/bsu_N_sf"/>
</dbReference>
<dbReference type="InterPro" id="IPR000194">
    <property type="entry name" value="ATPase_F1/V1/A1_a/bsu_nucl-bd"/>
</dbReference>
<dbReference type="InterPro" id="IPR024034">
    <property type="entry name" value="ATPase_F1/V1_b/a_C"/>
</dbReference>
<dbReference type="InterPro" id="IPR027417">
    <property type="entry name" value="P-loop_NTPase"/>
</dbReference>
<dbReference type="NCBIfam" id="TIGR01039">
    <property type="entry name" value="atpD"/>
    <property type="match status" value="1"/>
</dbReference>
<dbReference type="PANTHER" id="PTHR15184">
    <property type="entry name" value="ATP SYNTHASE"/>
    <property type="match status" value="1"/>
</dbReference>
<dbReference type="PANTHER" id="PTHR15184:SF71">
    <property type="entry name" value="ATP SYNTHASE SUBUNIT BETA, MITOCHONDRIAL"/>
    <property type="match status" value="1"/>
</dbReference>
<dbReference type="Pfam" id="PF00006">
    <property type="entry name" value="ATP-synt_ab"/>
    <property type="match status" value="1"/>
</dbReference>
<dbReference type="Pfam" id="PF02874">
    <property type="entry name" value="ATP-synt_ab_N"/>
    <property type="match status" value="1"/>
</dbReference>
<dbReference type="Pfam" id="PF22919">
    <property type="entry name" value="ATP-synt_VA_C"/>
    <property type="match status" value="1"/>
</dbReference>
<dbReference type="SMART" id="SM00382">
    <property type="entry name" value="AAA"/>
    <property type="match status" value="1"/>
</dbReference>
<dbReference type="SUPFAM" id="SSF47917">
    <property type="entry name" value="C-terminal domain of alpha and beta subunits of F1 ATP synthase"/>
    <property type="match status" value="1"/>
</dbReference>
<dbReference type="SUPFAM" id="SSF50615">
    <property type="entry name" value="N-terminal domain of alpha and beta subunits of F1 ATP synthase"/>
    <property type="match status" value="1"/>
</dbReference>
<dbReference type="SUPFAM" id="SSF52540">
    <property type="entry name" value="P-loop containing nucleoside triphosphate hydrolases"/>
    <property type="match status" value="1"/>
</dbReference>
<dbReference type="PROSITE" id="PS00152">
    <property type="entry name" value="ATPASE_ALPHA_BETA"/>
    <property type="match status" value="1"/>
</dbReference>
<gene>
    <name evidence="1" type="primary">atpD</name>
    <name type="ordered locus">CLB_0192</name>
</gene>
<sequence>MSNLGKVIQIIGPIIDIKFDSENLPDLFNALEINAGDRKVIAEVEQHIGDDTIRAIAMEDTEGLKRGMEALDTGKSVSVPVGKEVLGRLFNVLGKPIDGAGEFISEESYPIHRPAPSFEEQSVEPEIFETGIKVIDLLAPYQKGGKIGLFGGAGVGKTVLIQELINNIAKEHGGLSVFTGVGERTREGNDLYYEMKESGVLEKTALVFGQMNEPPGARMRVALTGLTMSEYFRDQGQDVLLFIDNIFRFTQAGSEVSALLGRIPSAVGYQPTLATEMGALQERITSTKNGSITSVQAVYVPADDLTDPAPATTFAHLDATTVLSRSITELGIYPAVDPLESSSRMLDPRIIGEEHYEVAIKVKNILERYRELQDIIAILGIDELSEEDKLVVGRARKIQRFLSQPFTVAEQFTGMQGKYVPIKETVRGFKEILEGKHDNIPESAFLFQGTIEDVLKKAQQMEI</sequence>
<reference key="1">
    <citation type="journal article" date="2007" name="PLoS ONE">
        <title>Analysis of the neurotoxin complex genes in Clostridium botulinum A1-A4 and B1 strains: BoNT/A3, /Ba4 and /B1 clusters are located within plasmids.</title>
        <authorList>
            <person name="Smith T.J."/>
            <person name="Hill K.K."/>
            <person name="Foley B.T."/>
            <person name="Detter J.C."/>
            <person name="Munk A.C."/>
            <person name="Bruce D.C."/>
            <person name="Doggett N.A."/>
            <person name="Smith L.A."/>
            <person name="Marks J.D."/>
            <person name="Xie G."/>
            <person name="Brettin T.S."/>
        </authorList>
    </citation>
    <scope>NUCLEOTIDE SEQUENCE [LARGE SCALE GENOMIC DNA]</scope>
    <source>
        <strain>ATCC 19397 / Type A</strain>
    </source>
</reference>
<name>ATPB_CLOB1</name>
<comment type="function">
    <text evidence="1">Produces ATP from ADP in the presence of a proton gradient across the membrane. The catalytic sites are hosted primarily by the beta subunits.</text>
</comment>
<comment type="catalytic activity">
    <reaction evidence="1">
        <text>ATP + H2O + 4 H(+)(in) = ADP + phosphate + 5 H(+)(out)</text>
        <dbReference type="Rhea" id="RHEA:57720"/>
        <dbReference type="ChEBI" id="CHEBI:15377"/>
        <dbReference type="ChEBI" id="CHEBI:15378"/>
        <dbReference type="ChEBI" id="CHEBI:30616"/>
        <dbReference type="ChEBI" id="CHEBI:43474"/>
        <dbReference type="ChEBI" id="CHEBI:456216"/>
        <dbReference type="EC" id="7.1.2.2"/>
    </reaction>
</comment>
<comment type="subunit">
    <text evidence="1">F-type ATPases have 2 components, CF(1) - the catalytic core - and CF(0) - the membrane proton channel. CF(1) has five subunits: alpha(3), beta(3), gamma(1), delta(1), epsilon(1). CF(0) has three main subunits: a(1), b(2) and c(9-12). The alpha and beta chains form an alternating ring which encloses part of the gamma chain. CF(1) is attached to CF(0) by a central stalk formed by the gamma and epsilon chains, while a peripheral stalk is formed by the delta and b chains.</text>
</comment>
<comment type="subcellular location">
    <subcellularLocation>
        <location evidence="1">Cell membrane</location>
        <topology evidence="1">Peripheral membrane protein</topology>
    </subcellularLocation>
</comment>
<comment type="similarity">
    <text evidence="1">Belongs to the ATPase alpha/beta chains family.</text>
</comment>
<organism>
    <name type="scientific">Clostridium botulinum (strain ATCC 19397 / Type A)</name>
    <dbReference type="NCBI Taxonomy" id="441770"/>
    <lineage>
        <taxon>Bacteria</taxon>
        <taxon>Bacillati</taxon>
        <taxon>Bacillota</taxon>
        <taxon>Clostridia</taxon>
        <taxon>Eubacteriales</taxon>
        <taxon>Clostridiaceae</taxon>
        <taxon>Clostridium</taxon>
    </lineage>
</organism>
<accession>A7FQH9</accession>
<protein>
    <recommendedName>
        <fullName evidence="1">ATP synthase subunit beta</fullName>
        <ecNumber evidence="1">7.1.2.2</ecNumber>
    </recommendedName>
    <alternativeName>
        <fullName evidence="1">ATP synthase F1 sector subunit beta</fullName>
    </alternativeName>
    <alternativeName>
        <fullName evidence="1">F-ATPase subunit beta</fullName>
    </alternativeName>
</protein>
<proteinExistence type="inferred from homology"/>